<dbReference type="EC" id="7.3.2.3" evidence="1"/>
<dbReference type="EMBL" id="BX571863">
    <property type="protein sequence ID" value="CAE13683.1"/>
    <property type="molecule type" value="Genomic_DNA"/>
</dbReference>
<dbReference type="RefSeq" id="WP_011145698.1">
    <property type="nucleotide sequence ID" value="NC_005126.1"/>
</dbReference>
<dbReference type="SMR" id="Q7N6Z2"/>
<dbReference type="STRING" id="243265.plu1390"/>
<dbReference type="GeneID" id="48847669"/>
<dbReference type="KEGG" id="plu:plu1390"/>
<dbReference type="eggNOG" id="COG1118">
    <property type="taxonomic scope" value="Bacteria"/>
</dbReference>
<dbReference type="HOGENOM" id="CLU_000604_1_1_6"/>
<dbReference type="OrthoDB" id="9802264at2"/>
<dbReference type="Proteomes" id="UP000002514">
    <property type="component" value="Chromosome"/>
</dbReference>
<dbReference type="GO" id="GO:0043190">
    <property type="term" value="C:ATP-binding cassette (ABC) transporter complex"/>
    <property type="evidence" value="ECO:0007669"/>
    <property type="project" value="InterPro"/>
</dbReference>
<dbReference type="GO" id="GO:0015419">
    <property type="term" value="F:ABC-type sulfate transporter activity"/>
    <property type="evidence" value="ECO:0007669"/>
    <property type="project" value="InterPro"/>
</dbReference>
<dbReference type="GO" id="GO:0102025">
    <property type="term" value="F:ABC-type thiosulfate transporter activity"/>
    <property type="evidence" value="ECO:0007669"/>
    <property type="project" value="RHEA"/>
</dbReference>
<dbReference type="GO" id="GO:0005524">
    <property type="term" value="F:ATP binding"/>
    <property type="evidence" value="ECO:0007669"/>
    <property type="project" value="UniProtKB-KW"/>
</dbReference>
<dbReference type="GO" id="GO:0016887">
    <property type="term" value="F:ATP hydrolysis activity"/>
    <property type="evidence" value="ECO:0007669"/>
    <property type="project" value="InterPro"/>
</dbReference>
<dbReference type="CDD" id="cd03296">
    <property type="entry name" value="ABC_CysA_sulfate_importer"/>
    <property type="match status" value="1"/>
</dbReference>
<dbReference type="FunFam" id="3.40.50.300:FF:000227">
    <property type="entry name" value="Sulfate/thiosulfate import ATP-binding protein CysA"/>
    <property type="match status" value="1"/>
</dbReference>
<dbReference type="Gene3D" id="3.40.50.300">
    <property type="entry name" value="P-loop containing nucleotide triphosphate hydrolases"/>
    <property type="match status" value="1"/>
</dbReference>
<dbReference type="InterPro" id="IPR003593">
    <property type="entry name" value="AAA+_ATPase"/>
</dbReference>
<dbReference type="InterPro" id="IPR050093">
    <property type="entry name" value="ABC_SmlMolc_Importer"/>
</dbReference>
<dbReference type="InterPro" id="IPR003439">
    <property type="entry name" value="ABC_transporter-like_ATP-bd"/>
</dbReference>
<dbReference type="InterPro" id="IPR017871">
    <property type="entry name" value="ABC_transporter-like_CS"/>
</dbReference>
<dbReference type="InterPro" id="IPR008995">
    <property type="entry name" value="Mo/tungstate-bd_C_term_dom"/>
</dbReference>
<dbReference type="InterPro" id="IPR027417">
    <property type="entry name" value="P-loop_NTPase"/>
</dbReference>
<dbReference type="InterPro" id="IPR005666">
    <property type="entry name" value="Sulph_transpt1"/>
</dbReference>
<dbReference type="NCBIfam" id="TIGR00968">
    <property type="entry name" value="3a0106s01"/>
    <property type="match status" value="1"/>
</dbReference>
<dbReference type="NCBIfam" id="NF008105">
    <property type="entry name" value="PRK10851.1"/>
    <property type="match status" value="1"/>
</dbReference>
<dbReference type="PANTHER" id="PTHR42781">
    <property type="entry name" value="SPERMIDINE/PUTRESCINE IMPORT ATP-BINDING PROTEIN POTA"/>
    <property type="match status" value="1"/>
</dbReference>
<dbReference type="PANTHER" id="PTHR42781:SF4">
    <property type="entry name" value="SPERMIDINE_PUTRESCINE IMPORT ATP-BINDING PROTEIN POTA"/>
    <property type="match status" value="1"/>
</dbReference>
<dbReference type="Pfam" id="PF00005">
    <property type="entry name" value="ABC_tran"/>
    <property type="match status" value="1"/>
</dbReference>
<dbReference type="SMART" id="SM00382">
    <property type="entry name" value="AAA"/>
    <property type="match status" value="1"/>
</dbReference>
<dbReference type="SUPFAM" id="SSF50331">
    <property type="entry name" value="MOP-like"/>
    <property type="match status" value="1"/>
</dbReference>
<dbReference type="SUPFAM" id="SSF52540">
    <property type="entry name" value="P-loop containing nucleoside triphosphate hydrolases"/>
    <property type="match status" value="1"/>
</dbReference>
<dbReference type="PROSITE" id="PS00211">
    <property type="entry name" value="ABC_TRANSPORTER_1"/>
    <property type="match status" value="1"/>
</dbReference>
<dbReference type="PROSITE" id="PS50893">
    <property type="entry name" value="ABC_TRANSPORTER_2"/>
    <property type="match status" value="1"/>
</dbReference>
<dbReference type="PROSITE" id="PS51237">
    <property type="entry name" value="CYSA"/>
    <property type="match status" value="1"/>
</dbReference>
<proteinExistence type="inferred from homology"/>
<evidence type="ECO:0000255" key="1">
    <source>
        <dbReference type="HAMAP-Rule" id="MF_01701"/>
    </source>
</evidence>
<comment type="function">
    <text evidence="1">Part of the ABC transporter complex CysAWTP involved in sulfate/thiosulfate import. Responsible for energy coupling to the transport system.</text>
</comment>
<comment type="catalytic activity">
    <reaction evidence="1">
        <text>sulfate(out) + ATP + H2O = sulfate(in) + ADP + phosphate + H(+)</text>
        <dbReference type="Rhea" id="RHEA:10192"/>
        <dbReference type="ChEBI" id="CHEBI:15377"/>
        <dbReference type="ChEBI" id="CHEBI:15378"/>
        <dbReference type="ChEBI" id="CHEBI:16189"/>
        <dbReference type="ChEBI" id="CHEBI:30616"/>
        <dbReference type="ChEBI" id="CHEBI:43474"/>
        <dbReference type="ChEBI" id="CHEBI:456216"/>
        <dbReference type="EC" id="7.3.2.3"/>
    </reaction>
</comment>
<comment type="catalytic activity">
    <reaction evidence="1">
        <text>thiosulfate(out) + ATP + H2O = thiosulfate(in) + ADP + phosphate + H(+)</text>
        <dbReference type="Rhea" id="RHEA:29871"/>
        <dbReference type="ChEBI" id="CHEBI:15377"/>
        <dbReference type="ChEBI" id="CHEBI:15378"/>
        <dbReference type="ChEBI" id="CHEBI:30616"/>
        <dbReference type="ChEBI" id="CHEBI:33542"/>
        <dbReference type="ChEBI" id="CHEBI:43474"/>
        <dbReference type="ChEBI" id="CHEBI:456216"/>
        <dbReference type="EC" id="7.3.2.3"/>
    </reaction>
</comment>
<comment type="subunit">
    <text evidence="1">The complex is composed of two ATP-binding proteins (CysA), two transmembrane proteins (CysT and CysW) and a solute-binding protein (CysP).</text>
</comment>
<comment type="subcellular location">
    <subcellularLocation>
        <location evidence="1">Cell inner membrane</location>
        <topology evidence="1">Peripheral membrane protein</topology>
    </subcellularLocation>
</comment>
<comment type="similarity">
    <text evidence="1">Belongs to the ABC transporter superfamily. Sulfate/tungstate importer (TC 3.A.1.6) family.</text>
</comment>
<reference key="1">
    <citation type="journal article" date="2003" name="Nat. Biotechnol.">
        <title>The genome sequence of the entomopathogenic bacterium Photorhabdus luminescens.</title>
        <authorList>
            <person name="Duchaud E."/>
            <person name="Rusniok C."/>
            <person name="Frangeul L."/>
            <person name="Buchrieser C."/>
            <person name="Givaudan A."/>
            <person name="Taourit S."/>
            <person name="Bocs S."/>
            <person name="Boursaux-Eude C."/>
            <person name="Chandler M."/>
            <person name="Charles J.-F."/>
            <person name="Dassa E."/>
            <person name="Derose R."/>
            <person name="Derzelle S."/>
            <person name="Freyssinet G."/>
            <person name="Gaudriault S."/>
            <person name="Medigue C."/>
            <person name="Lanois A."/>
            <person name="Powell K."/>
            <person name="Siguier P."/>
            <person name="Vincent R."/>
            <person name="Wingate V."/>
            <person name="Zouine M."/>
            <person name="Glaser P."/>
            <person name="Boemare N."/>
            <person name="Danchin A."/>
            <person name="Kunst F."/>
        </authorList>
    </citation>
    <scope>NUCLEOTIDE SEQUENCE [LARGE SCALE GENOMIC DNA]</scope>
    <source>
        <strain>DSM 15139 / CIP 105565 / TT01</strain>
    </source>
</reference>
<keyword id="KW-0067">ATP-binding</keyword>
<keyword id="KW-0997">Cell inner membrane</keyword>
<keyword id="KW-1003">Cell membrane</keyword>
<keyword id="KW-0472">Membrane</keyword>
<keyword id="KW-0547">Nucleotide-binding</keyword>
<keyword id="KW-1185">Reference proteome</keyword>
<keyword id="KW-0764">Sulfate transport</keyword>
<keyword id="KW-1278">Translocase</keyword>
<keyword id="KW-0813">Transport</keyword>
<organism>
    <name type="scientific">Photorhabdus laumondii subsp. laumondii (strain DSM 15139 / CIP 105565 / TT01)</name>
    <name type="common">Photorhabdus luminescens subsp. laumondii</name>
    <dbReference type="NCBI Taxonomy" id="243265"/>
    <lineage>
        <taxon>Bacteria</taxon>
        <taxon>Pseudomonadati</taxon>
        <taxon>Pseudomonadota</taxon>
        <taxon>Gammaproteobacteria</taxon>
        <taxon>Enterobacterales</taxon>
        <taxon>Morganellaceae</taxon>
        <taxon>Photorhabdus</taxon>
    </lineage>
</organism>
<gene>
    <name evidence="1" type="primary">cysA</name>
    <name type="ordered locus">plu1390</name>
</gene>
<feature type="chain" id="PRO_0000092281" description="Sulfate/thiosulfate import ATP-binding protein CysA">
    <location>
        <begin position="1"/>
        <end position="362"/>
    </location>
</feature>
<feature type="domain" description="ABC transporter" evidence="1">
    <location>
        <begin position="3"/>
        <end position="237"/>
    </location>
</feature>
<feature type="binding site" evidence="1">
    <location>
        <begin position="35"/>
        <end position="42"/>
    </location>
    <ligand>
        <name>ATP</name>
        <dbReference type="ChEBI" id="CHEBI:30616"/>
    </ligand>
</feature>
<sequence length="362" mass="40965">MSIEINNISKYFGRTQVLSDITLNVFSGEMVALLGPSGSGKTTLLRIIAGLEQQTAGKLSFHGQDVSRMHAKDRQVGFVFQHYALFRHMTVFDNVAFGLTVLPRRRRPNMAAIRRKVMELLEMVQLTHFAERYPSQLSGGQKQRVALARALAVEPQILLLDEPFGALDAQVRMELRRWLRQLHEELKFTSVFVTHDQEEAMEVADRVVVMRQGNIEQVGTPQEVWRYPASRFVMEFLGEVNHFSGEIKGSQLLIGGQHLPLNVTPIHQGNVDVFLRPWDIMMNSQPTLSSPLPVQVTEVSPRGHFWQLSVQPLGWHHESVAVVWFDETSVPTRGNRYFIGGTEARLYAGDKQLQTLSLAQTA</sequence>
<name>CYSA_PHOLL</name>
<accession>Q7N6Z2</accession>
<protein>
    <recommendedName>
        <fullName evidence="1">Sulfate/thiosulfate import ATP-binding protein CysA</fullName>
        <ecNumber evidence="1">7.3.2.3</ecNumber>
    </recommendedName>
    <alternativeName>
        <fullName evidence="1">Sulfate-transporting ATPase</fullName>
    </alternativeName>
</protein>